<organism>
    <name type="scientific">Bacillus pumilus (strain SAFR-032)</name>
    <dbReference type="NCBI Taxonomy" id="315750"/>
    <lineage>
        <taxon>Bacteria</taxon>
        <taxon>Bacillati</taxon>
        <taxon>Bacillota</taxon>
        <taxon>Bacilli</taxon>
        <taxon>Bacillales</taxon>
        <taxon>Bacillaceae</taxon>
        <taxon>Bacillus</taxon>
    </lineage>
</organism>
<feature type="chain" id="PRO_1000058521" description="GTPase Der">
    <location>
        <begin position="1"/>
        <end position="436"/>
    </location>
</feature>
<feature type="domain" description="EngA-type G 1">
    <location>
        <begin position="4"/>
        <end position="167"/>
    </location>
</feature>
<feature type="domain" description="EngA-type G 2">
    <location>
        <begin position="176"/>
        <end position="351"/>
    </location>
</feature>
<feature type="domain" description="KH-like" evidence="1">
    <location>
        <begin position="352"/>
        <end position="436"/>
    </location>
</feature>
<feature type="binding site" evidence="1">
    <location>
        <begin position="10"/>
        <end position="17"/>
    </location>
    <ligand>
        <name>GTP</name>
        <dbReference type="ChEBI" id="CHEBI:37565"/>
        <label>1</label>
    </ligand>
</feature>
<feature type="binding site" evidence="1">
    <location>
        <begin position="57"/>
        <end position="61"/>
    </location>
    <ligand>
        <name>GTP</name>
        <dbReference type="ChEBI" id="CHEBI:37565"/>
        <label>1</label>
    </ligand>
</feature>
<feature type="binding site" evidence="1">
    <location>
        <begin position="119"/>
        <end position="122"/>
    </location>
    <ligand>
        <name>GTP</name>
        <dbReference type="ChEBI" id="CHEBI:37565"/>
        <label>1</label>
    </ligand>
</feature>
<feature type="binding site" evidence="1">
    <location>
        <begin position="182"/>
        <end position="189"/>
    </location>
    <ligand>
        <name>GTP</name>
        <dbReference type="ChEBI" id="CHEBI:37565"/>
        <label>2</label>
    </ligand>
</feature>
<feature type="binding site" evidence="1">
    <location>
        <begin position="229"/>
        <end position="233"/>
    </location>
    <ligand>
        <name>GTP</name>
        <dbReference type="ChEBI" id="CHEBI:37565"/>
        <label>2</label>
    </ligand>
</feature>
<feature type="binding site" evidence="1">
    <location>
        <begin position="294"/>
        <end position="297"/>
    </location>
    <ligand>
        <name>GTP</name>
        <dbReference type="ChEBI" id="CHEBI:37565"/>
        <label>2</label>
    </ligand>
</feature>
<proteinExistence type="inferred from homology"/>
<evidence type="ECO:0000255" key="1">
    <source>
        <dbReference type="HAMAP-Rule" id="MF_00195"/>
    </source>
</evidence>
<reference key="1">
    <citation type="journal article" date="2007" name="PLoS ONE">
        <title>Paradoxical DNA repair and peroxide resistance gene conservation in Bacillus pumilus SAFR-032.</title>
        <authorList>
            <person name="Gioia J."/>
            <person name="Yerrapragada S."/>
            <person name="Qin X."/>
            <person name="Jiang H."/>
            <person name="Igboeli O.C."/>
            <person name="Muzny D."/>
            <person name="Dugan-Rocha S."/>
            <person name="Ding Y."/>
            <person name="Hawes A."/>
            <person name="Liu W."/>
            <person name="Perez L."/>
            <person name="Kovar C."/>
            <person name="Dinh H."/>
            <person name="Lee S."/>
            <person name="Nazareth L."/>
            <person name="Blyth P."/>
            <person name="Holder M."/>
            <person name="Buhay C."/>
            <person name="Tirumalai M.R."/>
            <person name="Liu Y."/>
            <person name="Dasgupta I."/>
            <person name="Bokhetache L."/>
            <person name="Fujita M."/>
            <person name="Karouia F."/>
            <person name="Eswara Moorthy P."/>
            <person name="Siefert J."/>
            <person name="Uzman A."/>
            <person name="Buzumbo P."/>
            <person name="Verma A."/>
            <person name="Zwiya H."/>
            <person name="McWilliams B.D."/>
            <person name="Olowu A."/>
            <person name="Clinkenbeard K.D."/>
            <person name="Newcombe D."/>
            <person name="Golebiewski L."/>
            <person name="Petrosino J.F."/>
            <person name="Nicholson W.L."/>
            <person name="Fox G.E."/>
            <person name="Venkateswaran K."/>
            <person name="Highlander S.K."/>
            <person name="Weinstock G.M."/>
        </authorList>
    </citation>
    <scope>NUCLEOTIDE SEQUENCE [LARGE SCALE GENOMIC DNA]</scope>
    <source>
        <strain>SAFR-032</strain>
    </source>
</reference>
<gene>
    <name evidence="1" type="primary">der</name>
    <name type="synonym">engA</name>
    <name type="ordered locus">BPUM_2015</name>
</gene>
<keyword id="KW-0342">GTP-binding</keyword>
<keyword id="KW-0547">Nucleotide-binding</keyword>
<keyword id="KW-0677">Repeat</keyword>
<keyword id="KW-0690">Ribosome biogenesis</keyword>
<comment type="function">
    <text evidence="1">GTPase that plays an essential role in the late steps of ribosome biogenesis.</text>
</comment>
<comment type="subunit">
    <text evidence="1">Associates with the 50S ribosomal subunit.</text>
</comment>
<comment type="similarity">
    <text evidence="1">Belongs to the TRAFAC class TrmE-Era-EngA-EngB-Septin-like GTPase superfamily. EngA (Der) GTPase family.</text>
</comment>
<sequence length="436" mass="48890">MGKPVVAIVGRPNVGKSTIFNRIAGERISIVEDTPGVTRDRIYSSAEWLNYDFNLIDTGGIDIGDEPFLAQIRHQAEIAMDEADVIIFMVNGRDGVTSADEEVAKILYRTKKPVVLAVNKLDNPEMRSDVYDFYALGFGEPYPISGTHGLGLGDLLDAVAEHFKNLPDTQYDEQVVQFCLIGRPNVGKSSLVNAMLGEDRVIVSNIAGTTRDAVDTMFAYNQRDFVIVDTAGMRKKGKVYETTEKYSVLRALKAIDRSDVVAVVLDGEEGIIEQDKRIAGYAHEAGKAVVIVVNKWDAVEKDERTMKEFEQNIREHFQFLDYAPVLFMSALTKKRIHTLMPSIITASENHAMRVQTNILNDIIMDAVAMNPTPTHNGQRLKIYYATQVAIKPPSFVVFVNDPELMHFSYERFLENRIRDAFGFEGTPIKIFARARK</sequence>
<name>DER_BACP2</name>
<dbReference type="EMBL" id="CP000813">
    <property type="protein sequence ID" value="ABV62685.1"/>
    <property type="molecule type" value="Genomic_DNA"/>
</dbReference>
<dbReference type="RefSeq" id="WP_012010393.1">
    <property type="nucleotide sequence ID" value="NZ_VEIS01000015.1"/>
</dbReference>
<dbReference type="SMR" id="A8FEL8"/>
<dbReference type="STRING" id="315750.BPUM_2015"/>
<dbReference type="GeneID" id="5621281"/>
<dbReference type="KEGG" id="bpu:BPUM_2015"/>
<dbReference type="eggNOG" id="COG1160">
    <property type="taxonomic scope" value="Bacteria"/>
</dbReference>
<dbReference type="HOGENOM" id="CLU_016077_6_2_9"/>
<dbReference type="OrthoDB" id="9805918at2"/>
<dbReference type="Proteomes" id="UP000001355">
    <property type="component" value="Chromosome"/>
</dbReference>
<dbReference type="GO" id="GO:0005525">
    <property type="term" value="F:GTP binding"/>
    <property type="evidence" value="ECO:0007669"/>
    <property type="project" value="UniProtKB-UniRule"/>
</dbReference>
<dbReference type="GO" id="GO:0043022">
    <property type="term" value="F:ribosome binding"/>
    <property type="evidence" value="ECO:0007669"/>
    <property type="project" value="TreeGrafter"/>
</dbReference>
<dbReference type="GO" id="GO:0042254">
    <property type="term" value="P:ribosome biogenesis"/>
    <property type="evidence" value="ECO:0007669"/>
    <property type="project" value="UniProtKB-KW"/>
</dbReference>
<dbReference type="CDD" id="cd01894">
    <property type="entry name" value="EngA1"/>
    <property type="match status" value="1"/>
</dbReference>
<dbReference type="CDD" id="cd01895">
    <property type="entry name" value="EngA2"/>
    <property type="match status" value="1"/>
</dbReference>
<dbReference type="FunFam" id="3.30.300.20:FF:000004">
    <property type="entry name" value="GTPase Der"/>
    <property type="match status" value="1"/>
</dbReference>
<dbReference type="FunFam" id="3.40.50.300:FF:000040">
    <property type="entry name" value="GTPase Der"/>
    <property type="match status" value="1"/>
</dbReference>
<dbReference type="FunFam" id="3.40.50.300:FF:000057">
    <property type="entry name" value="GTPase Der"/>
    <property type="match status" value="1"/>
</dbReference>
<dbReference type="Gene3D" id="3.30.300.20">
    <property type="match status" value="1"/>
</dbReference>
<dbReference type="Gene3D" id="3.40.50.300">
    <property type="entry name" value="P-loop containing nucleotide triphosphate hydrolases"/>
    <property type="match status" value="2"/>
</dbReference>
<dbReference type="HAMAP" id="MF_00195">
    <property type="entry name" value="GTPase_Der"/>
    <property type="match status" value="1"/>
</dbReference>
<dbReference type="InterPro" id="IPR031166">
    <property type="entry name" value="G_ENGA"/>
</dbReference>
<dbReference type="InterPro" id="IPR006073">
    <property type="entry name" value="GTP-bd"/>
</dbReference>
<dbReference type="InterPro" id="IPR016484">
    <property type="entry name" value="GTPase_Der"/>
</dbReference>
<dbReference type="InterPro" id="IPR032859">
    <property type="entry name" value="KH_dom-like"/>
</dbReference>
<dbReference type="InterPro" id="IPR015946">
    <property type="entry name" value="KH_dom-like_a/b"/>
</dbReference>
<dbReference type="InterPro" id="IPR027417">
    <property type="entry name" value="P-loop_NTPase"/>
</dbReference>
<dbReference type="InterPro" id="IPR005225">
    <property type="entry name" value="Small_GTP-bd"/>
</dbReference>
<dbReference type="NCBIfam" id="TIGR03594">
    <property type="entry name" value="GTPase_EngA"/>
    <property type="match status" value="1"/>
</dbReference>
<dbReference type="NCBIfam" id="TIGR00231">
    <property type="entry name" value="small_GTP"/>
    <property type="match status" value="2"/>
</dbReference>
<dbReference type="PANTHER" id="PTHR43834">
    <property type="entry name" value="GTPASE DER"/>
    <property type="match status" value="1"/>
</dbReference>
<dbReference type="PANTHER" id="PTHR43834:SF6">
    <property type="entry name" value="GTPASE DER"/>
    <property type="match status" value="1"/>
</dbReference>
<dbReference type="Pfam" id="PF14714">
    <property type="entry name" value="KH_dom-like"/>
    <property type="match status" value="1"/>
</dbReference>
<dbReference type="Pfam" id="PF01926">
    <property type="entry name" value="MMR_HSR1"/>
    <property type="match status" value="2"/>
</dbReference>
<dbReference type="PIRSF" id="PIRSF006485">
    <property type="entry name" value="GTP-binding_EngA"/>
    <property type="match status" value="1"/>
</dbReference>
<dbReference type="SUPFAM" id="SSF52540">
    <property type="entry name" value="P-loop containing nucleoside triphosphate hydrolases"/>
    <property type="match status" value="2"/>
</dbReference>
<dbReference type="PROSITE" id="PS51712">
    <property type="entry name" value="G_ENGA"/>
    <property type="match status" value="2"/>
</dbReference>
<protein>
    <recommendedName>
        <fullName evidence="1">GTPase Der</fullName>
    </recommendedName>
    <alternativeName>
        <fullName evidence="1">GTP-binding protein EngA</fullName>
    </alternativeName>
</protein>
<accession>A8FEL8</accession>